<protein>
    <recommendedName>
        <fullName evidence="1">4-hydroxy-tetrahydrodipicolinate synthase</fullName>
        <shortName evidence="1">HTPA synthase</shortName>
        <ecNumber evidence="1">4.3.3.7</ecNumber>
    </recommendedName>
</protein>
<comment type="function">
    <text evidence="1">Catalyzes the condensation of (S)-aspartate-beta-semialdehyde [(S)-ASA] and pyruvate to 4-hydroxy-tetrahydrodipicolinate (HTPA).</text>
</comment>
<comment type="catalytic activity">
    <reaction evidence="1">
        <text>L-aspartate 4-semialdehyde + pyruvate = (2S,4S)-4-hydroxy-2,3,4,5-tetrahydrodipicolinate + H2O + H(+)</text>
        <dbReference type="Rhea" id="RHEA:34171"/>
        <dbReference type="ChEBI" id="CHEBI:15361"/>
        <dbReference type="ChEBI" id="CHEBI:15377"/>
        <dbReference type="ChEBI" id="CHEBI:15378"/>
        <dbReference type="ChEBI" id="CHEBI:67139"/>
        <dbReference type="ChEBI" id="CHEBI:537519"/>
        <dbReference type="EC" id="4.3.3.7"/>
    </reaction>
</comment>
<comment type="pathway">
    <text evidence="1">Amino-acid biosynthesis; L-lysine biosynthesis via DAP pathway; (S)-tetrahydrodipicolinate from L-aspartate: step 3/4.</text>
</comment>
<comment type="subunit">
    <text evidence="1">Homotetramer; dimer of dimers.</text>
</comment>
<comment type="subcellular location">
    <subcellularLocation>
        <location evidence="1">Cytoplasm</location>
    </subcellularLocation>
</comment>
<comment type="similarity">
    <text evidence="1">Belongs to the DapA family.</text>
</comment>
<comment type="caution">
    <text evidence="2">Was originally thought to be a dihydrodipicolinate synthase (DHDPS), catalyzing the condensation of (S)-aspartate-beta-semialdehyde [(S)-ASA] and pyruvate to dihydrodipicolinate (DHDP). However, it was shown in E.coli that the product of the enzymatic reaction is not dihydrodipicolinate but in fact (4S)-4-hydroxy-2,3,4,5-tetrahydro-(2S)-dipicolinic acid (HTPA), and that the consecutive dehydration reaction leading to DHDP is not spontaneous but catalyzed by DapB.</text>
</comment>
<keyword id="KW-0028">Amino-acid biosynthesis</keyword>
<keyword id="KW-0963">Cytoplasm</keyword>
<keyword id="KW-0220">Diaminopimelate biosynthesis</keyword>
<keyword id="KW-0456">Lyase</keyword>
<keyword id="KW-0457">Lysine biosynthesis</keyword>
<keyword id="KW-1185">Reference proteome</keyword>
<keyword id="KW-0704">Schiff base</keyword>
<accession>B9KFX0</accession>
<evidence type="ECO:0000255" key="1">
    <source>
        <dbReference type="HAMAP-Rule" id="MF_00418"/>
    </source>
</evidence>
<evidence type="ECO:0000305" key="2"/>
<name>DAPA_CAMLR</name>
<proteinExistence type="inferred from homology"/>
<reference key="1">
    <citation type="journal article" date="2008" name="Foodborne Pathog. Dis.">
        <title>The complete genome sequence and analysis of the human pathogen Campylobacter lari.</title>
        <authorList>
            <person name="Miller W.G."/>
            <person name="Wang G."/>
            <person name="Binnewies T.T."/>
            <person name="Parker C.T."/>
        </authorList>
    </citation>
    <scope>NUCLEOTIDE SEQUENCE [LARGE SCALE GENOMIC DNA]</scope>
    <source>
        <strain>RM2100 / D67 / ATCC BAA-1060</strain>
    </source>
</reference>
<gene>
    <name evidence="1" type="primary">dapA</name>
    <name type="ordered locus">Cla_0626</name>
</gene>
<sequence>MDNNIIIGAMTALITPFKNGKLDEQTYHKLIKRQIANGIDAVVPVGTTGESATLTHEEHRICIEIALDACKGSSCKVLAGAGSNATHEAVSLAKFAQEHGADGILSVTPYYNKPTQEGLYLHYKEIAKSIDIPVLLYNVPGRTGCDLQTETIIRLFRDCENIYGVKEASGSIDKCVDLLAHEPRMMLLSGEDAINYPILSNGGKGVISVTSNLLPDMISKLTHFALEEKYIEAKKINDELYNINKILFCESNPIPIKAAMYIAGLTPTLEYRLPLCKPSDCNLAKIEAIMKNYDIKGF</sequence>
<dbReference type="EC" id="4.3.3.7" evidence="1"/>
<dbReference type="EMBL" id="CP000932">
    <property type="protein sequence ID" value="ACM63955.1"/>
    <property type="molecule type" value="Genomic_DNA"/>
</dbReference>
<dbReference type="RefSeq" id="WP_012661338.1">
    <property type="nucleotide sequence ID" value="NC_012039.1"/>
</dbReference>
<dbReference type="SMR" id="B9KFX0"/>
<dbReference type="STRING" id="306263.Cla_0626"/>
<dbReference type="KEGG" id="cla:CLA_0626"/>
<dbReference type="PATRIC" id="fig|306263.5.peg.606"/>
<dbReference type="eggNOG" id="COG0329">
    <property type="taxonomic scope" value="Bacteria"/>
</dbReference>
<dbReference type="HOGENOM" id="CLU_049343_7_1_7"/>
<dbReference type="UniPathway" id="UPA00034">
    <property type="reaction ID" value="UER00017"/>
</dbReference>
<dbReference type="Proteomes" id="UP000007727">
    <property type="component" value="Chromosome"/>
</dbReference>
<dbReference type="GO" id="GO:0005829">
    <property type="term" value="C:cytosol"/>
    <property type="evidence" value="ECO:0007669"/>
    <property type="project" value="TreeGrafter"/>
</dbReference>
<dbReference type="GO" id="GO:0008840">
    <property type="term" value="F:4-hydroxy-tetrahydrodipicolinate synthase activity"/>
    <property type="evidence" value="ECO:0007669"/>
    <property type="project" value="UniProtKB-UniRule"/>
</dbReference>
<dbReference type="GO" id="GO:0019877">
    <property type="term" value="P:diaminopimelate biosynthetic process"/>
    <property type="evidence" value="ECO:0007669"/>
    <property type="project" value="UniProtKB-UniRule"/>
</dbReference>
<dbReference type="GO" id="GO:0009089">
    <property type="term" value="P:lysine biosynthetic process via diaminopimelate"/>
    <property type="evidence" value="ECO:0007669"/>
    <property type="project" value="UniProtKB-UniRule"/>
</dbReference>
<dbReference type="CDD" id="cd00950">
    <property type="entry name" value="DHDPS"/>
    <property type="match status" value="1"/>
</dbReference>
<dbReference type="Gene3D" id="3.20.20.70">
    <property type="entry name" value="Aldolase class I"/>
    <property type="match status" value="1"/>
</dbReference>
<dbReference type="HAMAP" id="MF_00418">
    <property type="entry name" value="DapA"/>
    <property type="match status" value="1"/>
</dbReference>
<dbReference type="InterPro" id="IPR013785">
    <property type="entry name" value="Aldolase_TIM"/>
</dbReference>
<dbReference type="InterPro" id="IPR005263">
    <property type="entry name" value="DapA"/>
</dbReference>
<dbReference type="InterPro" id="IPR002220">
    <property type="entry name" value="DapA-like"/>
</dbReference>
<dbReference type="InterPro" id="IPR020625">
    <property type="entry name" value="Schiff_base-form_aldolases_AS"/>
</dbReference>
<dbReference type="InterPro" id="IPR020624">
    <property type="entry name" value="Schiff_base-form_aldolases_CS"/>
</dbReference>
<dbReference type="NCBIfam" id="TIGR00674">
    <property type="entry name" value="dapA"/>
    <property type="match status" value="1"/>
</dbReference>
<dbReference type="PANTHER" id="PTHR12128:SF66">
    <property type="entry name" value="4-HYDROXY-2-OXOGLUTARATE ALDOLASE, MITOCHONDRIAL"/>
    <property type="match status" value="1"/>
</dbReference>
<dbReference type="PANTHER" id="PTHR12128">
    <property type="entry name" value="DIHYDRODIPICOLINATE SYNTHASE"/>
    <property type="match status" value="1"/>
</dbReference>
<dbReference type="Pfam" id="PF00701">
    <property type="entry name" value="DHDPS"/>
    <property type="match status" value="1"/>
</dbReference>
<dbReference type="PIRSF" id="PIRSF001365">
    <property type="entry name" value="DHDPS"/>
    <property type="match status" value="1"/>
</dbReference>
<dbReference type="PRINTS" id="PR00146">
    <property type="entry name" value="DHPICSNTHASE"/>
</dbReference>
<dbReference type="SMART" id="SM01130">
    <property type="entry name" value="DHDPS"/>
    <property type="match status" value="1"/>
</dbReference>
<dbReference type="SUPFAM" id="SSF51569">
    <property type="entry name" value="Aldolase"/>
    <property type="match status" value="1"/>
</dbReference>
<dbReference type="PROSITE" id="PS00665">
    <property type="entry name" value="DHDPS_1"/>
    <property type="match status" value="1"/>
</dbReference>
<dbReference type="PROSITE" id="PS00666">
    <property type="entry name" value="DHDPS_2"/>
    <property type="match status" value="1"/>
</dbReference>
<organism>
    <name type="scientific">Campylobacter lari (strain RM2100 / D67 / ATCC BAA-1060)</name>
    <dbReference type="NCBI Taxonomy" id="306263"/>
    <lineage>
        <taxon>Bacteria</taxon>
        <taxon>Pseudomonadati</taxon>
        <taxon>Campylobacterota</taxon>
        <taxon>Epsilonproteobacteria</taxon>
        <taxon>Campylobacterales</taxon>
        <taxon>Campylobacteraceae</taxon>
        <taxon>Campylobacter</taxon>
    </lineage>
</organism>
<feature type="chain" id="PRO_1000134862" description="4-hydroxy-tetrahydrodipicolinate synthase">
    <location>
        <begin position="1"/>
        <end position="298"/>
    </location>
</feature>
<feature type="active site" description="Proton donor/acceptor" evidence="1">
    <location>
        <position position="137"/>
    </location>
</feature>
<feature type="active site" description="Schiff-base intermediate with substrate" evidence="1">
    <location>
        <position position="166"/>
    </location>
</feature>
<feature type="binding site" evidence="1">
    <location>
        <position position="48"/>
    </location>
    <ligand>
        <name>pyruvate</name>
        <dbReference type="ChEBI" id="CHEBI:15361"/>
    </ligand>
</feature>
<feature type="binding site" evidence="1">
    <location>
        <position position="207"/>
    </location>
    <ligand>
        <name>pyruvate</name>
        <dbReference type="ChEBI" id="CHEBI:15361"/>
    </ligand>
</feature>
<feature type="site" description="Part of a proton relay during catalysis" evidence="1">
    <location>
        <position position="47"/>
    </location>
</feature>
<feature type="site" description="Part of a proton relay during catalysis" evidence="1">
    <location>
        <position position="111"/>
    </location>
</feature>